<comment type="cofactor">
    <cofactor evidence="1">
        <name>Mn(2+)</name>
        <dbReference type="ChEBI" id="CHEBI:29035"/>
    </cofactor>
    <text evidence="1">Binds 2 manganese ions per subunit.</text>
</comment>
<comment type="similarity">
    <text evidence="2">Belongs to the metallophosphoesterase superfamily. YfcE family.</text>
</comment>
<comment type="sequence caution" evidence="2">
    <conflict type="erroneous initiation">
        <sequence resource="EMBL-CDS" id="AAC71425"/>
    </conflict>
    <text>Extended N-terminus.</text>
</comment>
<sequence>MIKVLVIADTHGQNQRWIELKNYHNPDVIIHAGDHMTTKQFMDQNATFWVAGNNDSIGNEIEIFQLGQINFVLMHGHQAPRDNLKKWYQLLVLKAQQYPCDVLIFGHSHIEYTNKINMIQLINPGSLQLPRNQTNTPSYCTFIVNKDELTDLTIHYYQASKVS</sequence>
<proteinExistence type="inferred from homology"/>
<reference key="1">
    <citation type="journal article" date="1995" name="Science">
        <title>The minimal gene complement of Mycoplasma genitalium.</title>
        <authorList>
            <person name="Fraser C.M."/>
            <person name="Gocayne J.D."/>
            <person name="White O."/>
            <person name="Adams M.D."/>
            <person name="Clayton R.A."/>
            <person name="Fleischmann R.D."/>
            <person name="Bult C.J."/>
            <person name="Kerlavage A.R."/>
            <person name="Sutton G.G."/>
            <person name="Kelley J.M."/>
            <person name="Fritchman J.L."/>
            <person name="Weidman J.F."/>
            <person name="Small K.V."/>
            <person name="Sandusky M."/>
            <person name="Fuhrmann J.L."/>
            <person name="Nguyen D.T."/>
            <person name="Utterback T.R."/>
            <person name="Saudek D.M."/>
            <person name="Phillips C.A."/>
            <person name="Merrick J.M."/>
            <person name="Tomb J.-F."/>
            <person name="Dougherty B.A."/>
            <person name="Bott K.F."/>
            <person name="Hu P.-C."/>
            <person name="Lucier T.S."/>
            <person name="Peterson S.N."/>
            <person name="Smith H.O."/>
            <person name="Hutchison C.A. III"/>
            <person name="Venter J.C."/>
        </authorList>
    </citation>
    <scope>NUCLEOTIDE SEQUENCE [LARGE SCALE GENOMIC DNA]</scope>
    <source>
        <strain>ATCC 33530 / DSM 19775 / NCTC 10195 / G37</strain>
    </source>
</reference>
<evidence type="ECO:0000250" key="1">
    <source>
        <dbReference type="UniProtKB" id="P67095"/>
    </source>
</evidence>
<evidence type="ECO:0000305" key="2"/>
<organism>
    <name type="scientific">Mycoplasma genitalium (strain ATCC 33530 / DSM 19775 / NCTC 10195 / G37)</name>
    <name type="common">Mycoplasmoides genitalium</name>
    <dbReference type="NCBI Taxonomy" id="243273"/>
    <lineage>
        <taxon>Bacteria</taxon>
        <taxon>Bacillati</taxon>
        <taxon>Mycoplasmatota</taxon>
        <taxon>Mycoplasmoidales</taxon>
        <taxon>Mycoplasmoidaceae</taxon>
        <taxon>Mycoplasmoides</taxon>
    </lineage>
</organism>
<keyword id="KW-0378">Hydrolase</keyword>
<keyword id="KW-0464">Manganese</keyword>
<keyword id="KW-0479">Metal-binding</keyword>
<keyword id="KW-1185">Reference proteome</keyword>
<gene>
    <name type="ordered locus">MG207</name>
</gene>
<dbReference type="EC" id="3.1.4.-" evidence="1"/>
<dbReference type="EMBL" id="L43967">
    <property type="protein sequence ID" value="AAC71425.1"/>
    <property type="status" value="ALT_INIT"/>
    <property type="molecule type" value="Genomic_DNA"/>
</dbReference>
<dbReference type="RefSeq" id="WP_193328797.1">
    <property type="nucleotide sequence ID" value="NC_000908.2"/>
</dbReference>
<dbReference type="SMR" id="P47449"/>
<dbReference type="STRING" id="243273.MG_207"/>
<dbReference type="GeneID" id="88282339"/>
<dbReference type="KEGG" id="mge:MG_207"/>
<dbReference type="eggNOG" id="COG0622">
    <property type="taxonomic scope" value="Bacteria"/>
</dbReference>
<dbReference type="HOGENOM" id="CLU_063749_2_0_14"/>
<dbReference type="InParanoid" id="P47449"/>
<dbReference type="BRENDA" id="3.1.3.16">
    <property type="organism ID" value="3528"/>
</dbReference>
<dbReference type="Proteomes" id="UP000000807">
    <property type="component" value="Chromosome"/>
</dbReference>
<dbReference type="GO" id="GO:0016787">
    <property type="term" value="F:hydrolase activity"/>
    <property type="evidence" value="ECO:0007669"/>
    <property type="project" value="UniProtKB-KW"/>
</dbReference>
<dbReference type="GO" id="GO:0046872">
    <property type="term" value="F:metal ion binding"/>
    <property type="evidence" value="ECO:0007669"/>
    <property type="project" value="UniProtKB-KW"/>
</dbReference>
<dbReference type="Gene3D" id="3.60.21.10">
    <property type="match status" value="1"/>
</dbReference>
<dbReference type="InterPro" id="IPR024654">
    <property type="entry name" value="Calcineurin-like_PHP_lpxH"/>
</dbReference>
<dbReference type="InterPro" id="IPR029052">
    <property type="entry name" value="Metallo-depent_PP-like"/>
</dbReference>
<dbReference type="InterPro" id="IPR020935">
    <property type="entry name" value="PdiEstase_YfcE_CS"/>
</dbReference>
<dbReference type="InterPro" id="IPR000979">
    <property type="entry name" value="Phosphodiesterase_MJ0936/Vps29"/>
</dbReference>
<dbReference type="NCBIfam" id="TIGR00040">
    <property type="entry name" value="yfcE"/>
    <property type="match status" value="1"/>
</dbReference>
<dbReference type="PANTHER" id="PTHR11124">
    <property type="entry name" value="VACUOLAR SORTING PROTEIN VPS29"/>
    <property type="match status" value="1"/>
</dbReference>
<dbReference type="Pfam" id="PF12850">
    <property type="entry name" value="Metallophos_2"/>
    <property type="match status" value="1"/>
</dbReference>
<dbReference type="SUPFAM" id="SSF56300">
    <property type="entry name" value="Metallo-dependent phosphatases"/>
    <property type="match status" value="1"/>
</dbReference>
<dbReference type="PROSITE" id="PS01269">
    <property type="entry name" value="UPF0025"/>
    <property type="match status" value="1"/>
</dbReference>
<feature type="chain" id="PRO_0000155609" description="Probable metallophosphoesterase MG207">
    <location>
        <begin position="1"/>
        <end position="163"/>
    </location>
</feature>
<feature type="binding site" evidence="1">
    <location>
        <position position="9"/>
    </location>
    <ligand>
        <name>Mn(2+)</name>
        <dbReference type="ChEBI" id="CHEBI:29035"/>
        <label>1</label>
    </ligand>
</feature>
<feature type="binding site" evidence="1">
    <location>
        <position position="11"/>
    </location>
    <ligand>
        <name>Mn(2+)</name>
        <dbReference type="ChEBI" id="CHEBI:29035"/>
        <label>1</label>
    </ligand>
</feature>
<feature type="binding site" evidence="1">
    <location>
        <position position="34"/>
    </location>
    <ligand>
        <name>Mn(2+)</name>
        <dbReference type="ChEBI" id="CHEBI:29035"/>
        <label>1</label>
    </ligand>
</feature>
<feature type="binding site" evidence="1">
    <location>
        <position position="34"/>
    </location>
    <ligand>
        <name>Mn(2+)</name>
        <dbReference type="ChEBI" id="CHEBI:29035"/>
        <label>2</label>
    </ligand>
</feature>
<feature type="binding site" evidence="1">
    <location>
        <position position="53"/>
    </location>
    <ligand>
        <name>Mn(2+)</name>
        <dbReference type="ChEBI" id="CHEBI:29035"/>
        <label>2</label>
    </ligand>
</feature>
<feature type="binding site" evidence="1">
    <location>
        <position position="75"/>
    </location>
    <ligand>
        <name>Mn(2+)</name>
        <dbReference type="ChEBI" id="CHEBI:29035"/>
        <label>2</label>
    </ligand>
</feature>
<feature type="binding site" evidence="1">
    <location>
        <position position="107"/>
    </location>
    <ligand>
        <name>Mn(2+)</name>
        <dbReference type="ChEBI" id="CHEBI:29035"/>
        <label>2</label>
    </ligand>
</feature>
<feature type="binding site" evidence="1">
    <location>
        <position position="109"/>
    </location>
    <ligand>
        <name>Mn(2+)</name>
        <dbReference type="ChEBI" id="CHEBI:29035"/>
        <label>1</label>
    </ligand>
</feature>
<name>Y207_MYCGE</name>
<accession>P47449</accession>
<protein>
    <recommendedName>
        <fullName evidence="2">Probable metallophosphoesterase MG207</fullName>
        <ecNumber evidence="1">3.1.4.-</ecNumber>
    </recommendedName>
</protein>